<gene>
    <name evidence="1" type="primary">lipB</name>
    <name type="ordered locus">BPP0169</name>
</gene>
<proteinExistence type="inferred from homology"/>
<protein>
    <recommendedName>
        <fullName evidence="1">Octanoyltransferase</fullName>
        <ecNumber evidence="1">2.3.1.181</ecNumber>
    </recommendedName>
    <alternativeName>
        <fullName evidence="1">Lipoate-protein ligase B</fullName>
    </alternativeName>
    <alternativeName>
        <fullName evidence="1">Lipoyl/octanoyl transferase</fullName>
    </alternativeName>
    <alternativeName>
        <fullName evidence="1">Octanoyl-[acyl-carrier-protein]-protein N-octanoyltransferase</fullName>
    </alternativeName>
</protein>
<comment type="function">
    <text evidence="1">Catalyzes the transfer of endogenously produced octanoic acid from octanoyl-acyl-carrier-protein onto the lipoyl domains of lipoate-dependent enzymes. Lipoyl-ACP can also act as a substrate although octanoyl-ACP is likely to be the physiological substrate.</text>
</comment>
<comment type="catalytic activity">
    <reaction evidence="1">
        <text>octanoyl-[ACP] + L-lysyl-[protein] = N(6)-octanoyl-L-lysyl-[protein] + holo-[ACP] + H(+)</text>
        <dbReference type="Rhea" id="RHEA:17665"/>
        <dbReference type="Rhea" id="RHEA-COMP:9636"/>
        <dbReference type="Rhea" id="RHEA-COMP:9685"/>
        <dbReference type="Rhea" id="RHEA-COMP:9752"/>
        <dbReference type="Rhea" id="RHEA-COMP:9928"/>
        <dbReference type="ChEBI" id="CHEBI:15378"/>
        <dbReference type="ChEBI" id="CHEBI:29969"/>
        <dbReference type="ChEBI" id="CHEBI:64479"/>
        <dbReference type="ChEBI" id="CHEBI:78463"/>
        <dbReference type="ChEBI" id="CHEBI:78809"/>
        <dbReference type="EC" id="2.3.1.181"/>
    </reaction>
</comment>
<comment type="pathway">
    <text evidence="1">Protein modification; protein lipoylation via endogenous pathway; protein N(6)-(lipoyl)lysine from octanoyl-[acyl-carrier-protein]: step 1/2.</text>
</comment>
<comment type="subcellular location">
    <subcellularLocation>
        <location evidence="1">Cytoplasm</location>
    </subcellularLocation>
</comment>
<comment type="miscellaneous">
    <text evidence="1">In the reaction, the free carboxyl group of octanoic acid is attached via an amide linkage to the epsilon-amino group of a specific lysine residue of lipoyl domains of lipoate-dependent enzymes.</text>
</comment>
<comment type="similarity">
    <text evidence="1">Belongs to the LipB family.</text>
</comment>
<evidence type="ECO:0000255" key="1">
    <source>
        <dbReference type="HAMAP-Rule" id="MF_00013"/>
    </source>
</evidence>
<evidence type="ECO:0000255" key="2">
    <source>
        <dbReference type="PROSITE-ProRule" id="PRU01067"/>
    </source>
</evidence>
<accession>Q7W223</accession>
<dbReference type="EC" id="2.3.1.181" evidence="1"/>
<dbReference type="EMBL" id="BX640423">
    <property type="protein sequence ID" value="CAE39910.1"/>
    <property type="molecule type" value="Genomic_DNA"/>
</dbReference>
<dbReference type="RefSeq" id="WP_010927327.1">
    <property type="nucleotide sequence ID" value="NC_002928.3"/>
</dbReference>
<dbReference type="SMR" id="Q7W223"/>
<dbReference type="GeneID" id="93206399"/>
<dbReference type="KEGG" id="bpa:BPP0169"/>
<dbReference type="HOGENOM" id="CLU_035168_3_1_4"/>
<dbReference type="UniPathway" id="UPA00538">
    <property type="reaction ID" value="UER00592"/>
</dbReference>
<dbReference type="Proteomes" id="UP000001421">
    <property type="component" value="Chromosome"/>
</dbReference>
<dbReference type="GO" id="GO:0005737">
    <property type="term" value="C:cytoplasm"/>
    <property type="evidence" value="ECO:0007669"/>
    <property type="project" value="UniProtKB-SubCell"/>
</dbReference>
<dbReference type="GO" id="GO:0033819">
    <property type="term" value="F:lipoyl(octanoyl) transferase activity"/>
    <property type="evidence" value="ECO:0007669"/>
    <property type="project" value="UniProtKB-EC"/>
</dbReference>
<dbReference type="GO" id="GO:0036211">
    <property type="term" value="P:protein modification process"/>
    <property type="evidence" value="ECO:0007669"/>
    <property type="project" value="InterPro"/>
</dbReference>
<dbReference type="CDD" id="cd16444">
    <property type="entry name" value="LipB"/>
    <property type="match status" value="1"/>
</dbReference>
<dbReference type="FunFam" id="3.30.930.10:FF:000020">
    <property type="entry name" value="Octanoyltransferase"/>
    <property type="match status" value="1"/>
</dbReference>
<dbReference type="Gene3D" id="3.30.930.10">
    <property type="entry name" value="Bira Bifunctional Protein, Domain 2"/>
    <property type="match status" value="1"/>
</dbReference>
<dbReference type="HAMAP" id="MF_00013">
    <property type="entry name" value="LipB"/>
    <property type="match status" value="1"/>
</dbReference>
<dbReference type="InterPro" id="IPR045864">
    <property type="entry name" value="aa-tRNA-synth_II/BPL/LPL"/>
</dbReference>
<dbReference type="InterPro" id="IPR004143">
    <property type="entry name" value="BPL_LPL_catalytic"/>
</dbReference>
<dbReference type="InterPro" id="IPR000544">
    <property type="entry name" value="Octanoyltransferase"/>
</dbReference>
<dbReference type="InterPro" id="IPR020605">
    <property type="entry name" value="Octanoyltransferase_CS"/>
</dbReference>
<dbReference type="NCBIfam" id="TIGR00214">
    <property type="entry name" value="lipB"/>
    <property type="match status" value="1"/>
</dbReference>
<dbReference type="NCBIfam" id="NF010922">
    <property type="entry name" value="PRK14342.1"/>
    <property type="match status" value="1"/>
</dbReference>
<dbReference type="PANTHER" id="PTHR10993:SF7">
    <property type="entry name" value="LIPOYLTRANSFERASE 2, MITOCHONDRIAL-RELATED"/>
    <property type="match status" value="1"/>
</dbReference>
<dbReference type="PANTHER" id="PTHR10993">
    <property type="entry name" value="OCTANOYLTRANSFERASE"/>
    <property type="match status" value="1"/>
</dbReference>
<dbReference type="Pfam" id="PF21948">
    <property type="entry name" value="LplA-B_cat"/>
    <property type="match status" value="1"/>
</dbReference>
<dbReference type="PIRSF" id="PIRSF016262">
    <property type="entry name" value="LPLase"/>
    <property type="match status" value="1"/>
</dbReference>
<dbReference type="SUPFAM" id="SSF55681">
    <property type="entry name" value="Class II aaRS and biotin synthetases"/>
    <property type="match status" value="1"/>
</dbReference>
<dbReference type="PROSITE" id="PS51733">
    <property type="entry name" value="BPL_LPL_CATALYTIC"/>
    <property type="match status" value="1"/>
</dbReference>
<dbReference type="PROSITE" id="PS01313">
    <property type="entry name" value="LIPB"/>
    <property type="match status" value="1"/>
</dbReference>
<reference key="1">
    <citation type="journal article" date="2003" name="Nat. Genet.">
        <title>Comparative analysis of the genome sequences of Bordetella pertussis, Bordetella parapertussis and Bordetella bronchiseptica.</title>
        <authorList>
            <person name="Parkhill J."/>
            <person name="Sebaihia M."/>
            <person name="Preston A."/>
            <person name="Murphy L.D."/>
            <person name="Thomson N.R."/>
            <person name="Harris D.E."/>
            <person name="Holden M.T.G."/>
            <person name="Churcher C.M."/>
            <person name="Bentley S.D."/>
            <person name="Mungall K.L."/>
            <person name="Cerdeno-Tarraga A.-M."/>
            <person name="Temple L."/>
            <person name="James K.D."/>
            <person name="Harris B."/>
            <person name="Quail M.A."/>
            <person name="Achtman M."/>
            <person name="Atkin R."/>
            <person name="Baker S."/>
            <person name="Basham D."/>
            <person name="Bason N."/>
            <person name="Cherevach I."/>
            <person name="Chillingworth T."/>
            <person name="Collins M."/>
            <person name="Cronin A."/>
            <person name="Davis P."/>
            <person name="Doggett J."/>
            <person name="Feltwell T."/>
            <person name="Goble A."/>
            <person name="Hamlin N."/>
            <person name="Hauser H."/>
            <person name="Holroyd S."/>
            <person name="Jagels K."/>
            <person name="Leather S."/>
            <person name="Moule S."/>
            <person name="Norberczak H."/>
            <person name="O'Neil S."/>
            <person name="Ormond D."/>
            <person name="Price C."/>
            <person name="Rabbinowitsch E."/>
            <person name="Rutter S."/>
            <person name="Sanders M."/>
            <person name="Saunders D."/>
            <person name="Seeger K."/>
            <person name="Sharp S."/>
            <person name="Simmonds M."/>
            <person name="Skelton J."/>
            <person name="Squares R."/>
            <person name="Squares S."/>
            <person name="Stevens K."/>
            <person name="Unwin L."/>
            <person name="Whitehead S."/>
            <person name="Barrell B.G."/>
            <person name="Maskell D.J."/>
        </authorList>
    </citation>
    <scope>NUCLEOTIDE SEQUENCE [LARGE SCALE GENOMIC DNA]</scope>
    <source>
        <strain>12822 / ATCC BAA-587 / NCTC 13253</strain>
    </source>
</reference>
<keyword id="KW-0012">Acyltransferase</keyword>
<keyword id="KW-0963">Cytoplasm</keyword>
<keyword id="KW-0808">Transferase</keyword>
<organism>
    <name type="scientific">Bordetella parapertussis (strain 12822 / ATCC BAA-587 / NCTC 13253)</name>
    <dbReference type="NCBI Taxonomy" id="257311"/>
    <lineage>
        <taxon>Bacteria</taxon>
        <taxon>Pseudomonadati</taxon>
        <taxon>Pseudomonadota</taxon>
        <taxon>Betaproteobacteria</taxon>
        <taxon>Burkholderiales</taxon>
        <taxon>Alcaligenaceae</taxon>
        <taxon>Bordetella</taxon>
    </lineage>
</organism>
<feature type="chain" id="PRO_0000062815" description="Octanoyltransferase">
    <location>
        <begin position="1"/>
        <end position="220"/>
    </location>
</feature>
<feature type="domain" description="BPL/LPL catalytic" evidence="2">
    <location>
        <begin position="27"/>
        <end position="208"/>
    </location>
</feature>
<feature type="active site" description="Acyl-thioester intermediate" evidence="1">
    <location>
        <position position="170"/>
    </location>
</feature>
<feature type="binding site" evidence="1">
    <location>
        <begin position="66"/>
        <end position="73"/>
    </location>
    <ligand>
        <name>substrate</name>
    </ligand>
</feature>
<feature type="binding site" evidence="1">
    <location>
        <begin position="139"/>
        <end position="141"/>
    </location>
    <ligand>
        <name>substrate</name>
    </ligand>
</feature>
<feature type="binding site" evidence="1">
    <location>
        <begin position="152"/>
        <end position="154"/>
    </location>
    <ligand>
        <name>substrate</name>
    </ligand>
</feature>
<feature type="site" description="Lowers pKa of active site Cys" evidence="1">
    <location>
        <position position="136"/>
    </location>
</feature>
<name>LIPB_BORPA</name>
<sequence>MIKWLARPADYGSVWDAMKAFTAARGPGTADEIWLCEHAPVYTLGQAGRPEHLLNPGLIPVVHCDRGGQVTYHGPGQVLAYTLFDLRRAGLYVREYVDMLEQATLATLRELGLEQACRKPGAPGIYVPQPGGELAKIAALGVKVRNGYAYHGLALNIDMDLSPFLGINPCGYEGLRTVDLAACGVRTSVERAGELLAAQLARAHGHAVQQRAAALAGVPG</sequence>